<reference key="1">
    <citation type="journal article" date="2002" name="Genome Res.">
        <title>The genome of Methanosarcina acetivorans reveals extensive metabolic and physiological diversity.</title>
        <authorList>
            <person name="Galagan J.E."/>
            <person name="Nusbaum C."/>
            <person name="Roy A."/>
            <person name="Endrizzi M.G."/>
            <person name="Macdonald P."/>
            <person name="FitzHugh W."/>
            <person name="Calvo S."/>
            <person name="Engels R."/>
            <person name="Smirnov S."/>
            <person name="Atnoor D."/>
            <person name="Brown A."/>
            <person name="Allen N."/>
            <person name="Naylor J."/>
            <person name="Stange-Thomann N."/>
            <person name="DeArellano K."/>
            <person name="Johnson R."/>
            <person name="Linton L."/>
            <person name="McEwan P."/>
            <person name="McKernan K."/>
            <person name="Talamas J."/>
            <person name="Tirrell A."/>
            <person name="Ye W."/>
            <person name="Zimmer A."/>
            <person name="Barber R.D."/>
            <person name="Cann I."/>
            <person name="Graham D.E."/>
            <person name="Grahame D.A."/>
            <person name="Guss A.M."/>
            <person name="Hedderich R."/>
            <person name="Ingram-Smith C."/>
            <person name="Kuettner H.C."/>
            <person name="Krzycki J.A."/>
            <person name="Leigh J.A."/>
            <person name="Li W."/>
            <person name="Liu J."/>
            <person name="Mukhopadhyay B."/>
            <person name="Reeve J.N."/>
            <person name="Smith K."/>
            <person name="Springer T.A."/>
            <person name="Umayam L.A."/>
            <person name="White O."/>
            <person name="White R.H."/>
            <person name="de Macario E.C."/>
            <person name="Ferry J.G."/>
            <person name="Jarrell K.F."/>
            <person name="Jing H."/>
            <person name="Macario A.J.L."/>
            <person name="Paulsen I.T."/>
            <person name="Pritchett M."/>
            <person name="Sowers K.R."/>
            <person name="Swanson R.V."/>
            <person name="Zinder S.H."/>
            <person name="Lander E."/>
            <person name="Metcalf W.W."/>
            <person name="Birren B."/>
        </authorList>
    </citation>
    <scope>NUCLEOTIDE SEQUENCE [LARGE SCALE GENOMIC DNA]</scope>
    <source>
        <strain>ATCC 35395 / DSM 2834 / JCM 12185 / C2A</strain>
    </source>
</reference>
<proteinExistence type="inferred from homology"/>
<feature type="chain" id="PRO_0000154005" description="TATA-box-binding protein 1">
    <location>
        <begin position="1"/>
        <end position="183"/>
    </location>
</feature>
<feature type="repeat" description="1">
    <location>
        <begin position="8"/>
        <end position="84"/>
    </location>
</feature>
<feature type="repeat" description="2">
    <location>
        <begin position="99"/>
        <end position="177"/>
    </location>
</feature>
<evidence type="ECO:0000255" key="1">
    <source>
        <dbReference type="HAMAP-Rule" id="MF_00408"/>
    </source>
</evidence>
<keyword id="KW-0238">DNA-binding</keyword>
<keyword id="KW-1185">Reference proteome</keyword>
<keyword id="KW-0677">Repeat</keyword>
<keyword id="KW-0804">Transcription</keyword>
<keyword id="KW-0805">Transcription regulation</keyword>
<organism>
    <name type="scientific">Methanosarcina acetivorans (strain ATCC 35395 / DSM 2834 / JCM 12185 / C2A)</name>
    <dbReference type="NCBI Taxonomy" id="188937"/>
    <lineage>
        <taxon>Archaea</taxon>
        <taxon>Methanobacteriati</taxon>
        <taxon>Methanobacteriota</taxon>
        <taxon>Stenosarchaea group</taxon>
        <taxon>Methanomicrobia</taxon>
        <taxon>Methanosarcinales</taxon>
        <taxon>Methanosarcinaceae</taxon>
        <taxon>Methanosarcina</taxon>
    </lineage>
</organism>
<comment type="function">
    <text evidence="1">General factor that plays a role in the activation of archaeal genes transcribed by RNA polymerase. Binds specifically to the TATA box promoter element which lies close to the position of transcription initiation.</text>
</comment>
<comment type="similarity">
    <text evidence="1">Belongs to the TBP family.</text>
</comment>
<protein>
    <recommendedName>
        <fullName evidence="1">TATA-box-binding protein 1</fullName>
    </recommendedName>
    <alternativeName>
        <fullName evidence="1">Box A-binding protein 1</fullName>
        <shortName evidence="1">BAP 1</shortName>
    </alternativeName>
    <alternativeName>
        <fullName evidence="1">TATA sequence-binding protein 1</fullName>
        <shortName evidence="1">TBP 1</shortName>
    </alternativeName>
    <alternativeName>
        <fullName evidence="1">TATA-box factor 1</fullName>
    </alternativeName>
</protein>
<gene>
    <name evidence="1" type="primary">tbp1</name>
    <name type="synonym">tbp-1</name>
    <name type="ordered locus">MA_4331</name>
</gene>
<name>TBP1_METAC</name>
<dbReference type="EMBL" id="AE010299">
    <property type="protein sequence ID" value="AAM07674.1"/>
    <property type="molecule type" value="Genomic_DNA"/>
</dbReference>
<dbReference type="RefSeq" id="WP_011024211.1">
    <property type="nucleotide sequence ID" value="NC_003552.1"/>
</dbReference>
<dbReference type="SMR" id="Q8TI26"/>
<dbReference type="FunCoup" id="Q8TI26">
    <property type="interactions" value="144"/>
</dbReference>
<dbReference type="STRING" id="188937.MA_4331"/>
<dbReference type="EnsemblBacteria" id="AAM07674">
    <property type="protein sequence ID" value="AAM07674"/>
    <property type="gene ID" value="MA_4331"/>
</dbReference>
<dbReference type="KEGG" id="mac:MA_4331"/>
<dbReference type="HOGENOM" id="CLU_060161_4_3_2"/>
<dbReference type="InParanoid" id="Q8TI26"/>
<dbReference type="OrthoDB" id="350539at2157"/>
<dbReference type="PhylomeDB" id="Q8TI26"/>
<dbReference type="Proteomes" id="UP000002487">
    <property type="component" value="Chromosome"/>
</dbReference>
<dbReference type="GO" id="GO:0003677">
    <property type="term" value="F:DNA binding"/>
    <property type="evidence" value="ECO:0007669"/>
    <property type="project" value="UniProtKB-KW"/>
</dbReference>
<dbReference type="GO" id="GO:0003700">
    <property type="term" value="F:DNA-binding transcription factor activity"/>
    <property type="evidence" value="ECO:0007669"/>
    <property type="project" value="UniProtKB-UniRule"/>
</dbReference>
<dbReference type="GO" id="GO:0140223">
    <property type="term" value="F:general transcription initiation factor activity"/>
    <property type="evidence" value="ECO:0000318"/>
    <property type="project" value="GO_Central"/>
</dbReference>
<dbReference type="GO" id="GO:0006352">
    <property type="term" value="P:DNA-templated transcription initiation"/>
    <property type="evidence" value="ECO:0000318"/>
    <property type="project" value="GO_Central"/>
</dbReference>
<dbReference type="CDD" id="cd04518">
    <property type="entry name" value="TBP_archaea"/>
    <property type="match status" value="1"/>
</dbReference>
<dbReference type="FunFam" id="3.30.310.10:FF:000007">
    <property type="entry name" value="TATA-box-binding protein"/>
    <property type="match status" value="1"/>
</dbReference>
<dbReference type="FunFam" id="3.30.310.10:FF:000010">
    <property type="entry name" value="TATA-box-binding protein"/>
    <property type="match status" value="1"/>
</dbReference>
<dbReference type="Gene3D" id="3.30.310.10">
    <property type="entry name" value="TATA-Binding Protein"/>
    <property type="match status" value="2"/>
</dbReference>
<dbReference type="HAMAP" id="MF_00408">
    <property type="entry name" value="TATA_bind_prot_arch"/>
    <property type="match status" value="1"/>
</dbReference>
<dbReference type="InterPro" id="IPR000814">
    <property type="entry name" value="TBP"/>
</dbReference>
<dbReference type="InterPro" id="IPR033711">
    <property type="entry name" value="TBP_archaea"/>
</dbReference>
<dbReference type="InterPro" id="IPR030491">
    <property type="entry name" value="TBP_CS"/>
</dbReference>
<dbReference type="InterPro" id="IPR012295">
    <property type="entry name" value="TBP_dom_sf"/>
</dbReference>
<dbReference type="NCBIfam" id="NF001593">
    <property type="entry name" value="PRK00394.1-2"/>
    <property type="match status" value="1"/>
</dbReference>
<dbReference type="NCBIfam" id="NF001596">
    <property type="entry name" value="PRK00394.2-1"/>
    <property type="match status" value="1"/>
</dbReference>
<dbReference type="NCBIfam" id="NF001597">
    <property type="entry name" value="PRK00394.2-2"/>
    <property type="match status" value="1"/>
</dbReference>
<dbReference type="NCBIfam" id="NF001599">
    <property type="entry name" value="PRK00394.2-4"/>
    <property type="match status" value="1"/>
</dbReference>
<dbReference type="PANTHER" id="PTHR10126">
    <property type="entry name" value="TATA-BOX BINDING PROTEIN"/>
    <property type="match status" value="1"/>
</dbReference>
<dbReference type="Pfam" id="PF00352">
    <property type="entry name" value="TBP"/>
    <property type="match status" value="2"/>
</dbReference>
<dbReference type="PRINTS" id="PR00686">
    <property type="entry name" value="TIFACTORIID"/>
</dbReference>
<dbReference type="SUPFAM" id="SSF55945">
    <property type="entry name" value="TATA-box binding protein-like"/>
    <property type="match status" value="2"/>
</dbReference>
<dbReference type="PROSITE" id="PS00351">
    <property type="entry name" value="TFIID"/>
    <property type="match status" value="1"/>
</dbReference>
<sequence length="183" mass="19884">MSESSIKIENVVASTKLAEEFDLTVIESEFEGAEYNKQKFPGLVYRVSDPKAAFLVFTSGKVVCTGAKNVADVHTVIGNMAKKLNSIGIKTMENPQITVQNIVASADLHTILNLNAIAIGLGLENIEYEPEQFPGLVYRIDEPKVVVLIFSSGKLVVTGGKSPEDCERGVEVVRQQLDNMGLL</sequence>
<accession>Q8TI26</accession>